<gene>
    <name evidence="1" type="primary">argS</name>
    <name type="ordered locus">HCH_01116</name>
</gene>
<proteinExistence type="inferred from homology"/>
<keyword id="KW-0030">Aminoacyl-tRNA synthetase</keyword>
<keyword id="KW-0067">ATP-binding</keyword>
<keyword id="KW-0963">Cytoplasm</keyword>
<keyword id="KW-0436">Ligase</keyword>
<keyword id="KW-0547">Nucleotide-binding</keyword>
<keyword id="KW-0648">Protein biosynthesis</keyword>
<keyword id="KW-1185">Reference proteome</keyword>
<feature type="chain" id="PRO_0000242030" description="Arginine--tRNA ligase">
    <location>
        <begin position="1"/>
        <end position="578"/>
    </location>
</feature>
<feature type="short sequence motif" description="'HIGH' region">
    <location>
        <begin position="123"/>
        <end position="133"/>
    </location>
</feature>
<evidence type="ECO:0000255" key="1">
    <source>
        <dbReference type="HAMAP-Rule" id="MF_00123"/>
    </source>
</evidence>
<sequence length="578" mass="64231">MNLQQLLEQKISAALHAAGAPEGSPAIVKPSGKPQFGDYQANGVMGAAKALKMNPRELATKVLDVLDLGDMAEKVEIAGPGFINIFLSKDWMSQSLRQVLADPRLTIPLDSPKQTVVVDYSAPNLAKEMHVGHLRSTIIGDAVVRTLEFLGHRVIRQNHVGDWGTQFGMLLAYMNKLKAENQQTLSMELADLENFYRQAKTCFDEDPEFKDSARQYVVKLQSGDQECVSLWKTFIDISLQHCEDVYERLNVSLTRADVMPESAYNEDLPNVIDDLREKGLLTNSDGAECVFMDEFKGKDDETLPLIVKKSDGGYLYATTDLAALRYRERVLKANRVLYFVDARQSLHLNQVYAAGRKAGFVSPDMSLEHMAFGMVLGADGKPFKTRDGGTVKLADLLTEAQGRAYAVVKGKNPEMPEEELNRIAHVVGMAAVKYADLSKNRSSDYIFSFDAMLSLEGNTAPYVQYAYSRVVNVFKKGEVGNLTFEGDLQLAEPIERALAVRLLQFNEILHSVASEGCPHILCGYLYDLSKEFASFYEGCPVLKAEEPVRSSRLMLSLLIAKTLKQGLDLLGIETLERM</sequence>
<comment type="catalytic activity">
    <reaction evidence="1">
        <text>tRNA(Arg) + L-arginine + ATP = L-arginyl-tRNA(Arg) + AMP + diphosphate</text>
        <dbReference type="Rhea" id="RHEA:20301"/>
        <dbReference type="Rhea" id="RHEA-COMP:9658"/>
        <dbReference type="Rhea" id="RHEA-COMP:9673"/>
        <dbReference type="ChEBI" id="CHEBI:30616"/>
        <dbReference type="ChEBI" id="CHEBI:32682"/>
        <dbReference type="ChEBI" id="CHEBI:33019"/>
        <dbReference type="ChEBI" id="CHEBI:78442"/>
        <dbReference type="ChEBI" id="CHEBI:78513"/>
        <dbReference type="ChEBI" id="CHEBI:456215"/>
        <dbReference type="EC" id="6.1.1.19"/>
    </reaction>
</comment>
<comment type="subunit">
    <text evidence="1">Monomer.</text>
</comment>
<comment type="subcellular location">
    <subcellularLocation>
        <location evidence="1">Cytoplasm</location>
    </subcellularLocation>
</comment>
<comment type="similarity">
    <text evidence="1">Belongs to the class-I aminoacyl-tRNA synthetase family.</text>
</comment>
<accession>Q2SMY0</accession>
<name>SYR_HAHCH</name>
<reference key="1">
    <citation type="journal article" date="2005" name="Nucleic Acids Res.">
        <title>Genomic blueprint of Hahella chejuensis, a marine microbe producing an algicidal agent.</title>
        <authorList>
            <person name="Jeong H."/>
            <person name="Yim J.H."/>
            <person name="Lee C."/>
            <person name="Choi S.-H."/>
            <person name="Park Y.K."/>
            <person name="Yoon S.H."/>
            <person name="Hur C.-G."/>
            <person name="Kang H.-Y."/>
            <person name="Kim D."/>
            <person name="Lee H.H."/>
            <person name="Park K.H."/>
            <person name="Park S.-H."/>
            <person name="Park H.-S."/>
            <person name="Lee H.K."/>
            <person name="Oh T.K."/>
            <person name="Kim J.F."/>
        </authorList>
    </citation>
    <scope>NUCLEOTIDE SEQUENCE [LARGE SCALE GENOMIC DNA]</scope>
    <source>
        <strain>KCTC 2396</strain>
    </source>
</reference>
<organism>
    <name type="scientific">Hahella chejuensis (strain KCTC 2396)</name>
    <dbReference type="NCBI Taxonomy" id="349521"/>
    <lineage>
        <taxon>Bacteria</taxon>
        <taxon>Pseudomonadati</taxon>
        <taxon>Pseudomonadota</taxon>
        <taxon>Gammaproteobacteria</taxon>
        <taxon>Oceanospirillales</taxon>
        <taxon>Hahellaceae</taxon>
        <taxon>Hahella</taxon>
    </lineage>
</organism>
<protein>
    <recommendedName>
        <fullName evidence="1">Arginine--tRNA ligase</fullName>
        <ecNumber evidence="1">6.1.1.19</ecNumber>
    </recommendedName>
    <alternativeName>
        <fullName evidence="1">Arginyl-tRNA synthetase</fullName>
        <shortName evidence="1">ArgRS</shortName>
    </alternativeName>
</protein>
<dbReference type="EC" id="6.1.1.19" evidence="1"/>
<dbReference type="EMBL" id="CP000155">
    <property type="protein sequence ID" value="ABC27994.1"/>
    <property type="molecule type" value="Genomic_DNA"/>
</dbReference>
<dbReference type="RefSeq" id="WP_011395069.1">
    <property type="nucleotide sequence ID" value="NC_007645.1"/>
</dbReference>
<dbReference type="SMR" id="Q2SMY0"/>
<dbReference type="STRING" id="349521.HCH_01116"/>
<dbReference type="KEGG" id="hch:HCH_01116"/>
<dbReference type="eggNOG" id="COG0018">
    <property type="taxonomic scope" value="Bacteria"/>
</dbReference>
<dbReference type="HOGENOM" id="CLU_006406_5_1_6"/>
<dbReference type="OrthoDB" id="9803211at2"/>
<dbReference type="Proteomes" id="UP000000238">
    <property type="component" value="Chromosome"/>
</dbReference>
<dbReference type="GO" id="GO:0005737">
    <property type="term" value="C:cytoplasm"/>
    <property type="evidence" value="ECO:0007669"/>
    <property type="project" value="UniProtKB-SubCell"/>
</dbReference>
<dbReference type="GO" id="GO:0004814">
    <property type="term" value="F:arginine-tRNA ligase activity"/>
    <property type="evidence" value="ECO:0007669"/>
    <property type="project" value="UniProtKB-UniRule"/>
</dbReference>
<dbReference type="GO" id="GO:0005524">
    <property type="term" value="F:ATP binding"/>
    <property type="evidence" value="ECO:0007669"/>
    <property type="project" value="UniProtKB-UniRule"/>
</dbReference>
<dbReference type="GO" id="GO:0006420">
    <property type="term" value="P:arginyl-tRNA aminoacylation"/>
    <property type="evidence" value="ECO:0007669"/>
    <property type="project" value="UniProtKB-UniRule"/>
</dbReference>
<dbReference type="CDD" id="cd07956">
    <property type="entry name" value="Anticodon_Ia_Arg"/>
    <property type="match status" value="1"/>
</dbReference>
<dbReference type="CDD" id="cd00671">
    <property type="entry name" value="ArgRS_core"/>
    <property type="match status" value="1"/>
</dbReference>
<dbReference type="FunFam" id="3.40.50.620:FF:000030">
    <property type="entry name" value="Arginine--tRNA ligase"/>
    <property type="match status" value="1"/>
</dbReference>
<dbReference type="FunFam" id="1.10.730.10:FF:000006">
    <property type="entry name" value="Arginyl-tRNA synthetase 2, mitochondrial"/>
    <property type="match status" value="1"/>
</dbReference>
<dbReference type="Gene3D" id="3.30.1360.70">
    <property type="entry name" value="Arginyl tRNA synthetase N-terminal domain"/>
    <property type="match status" value="1"/>
</dbReference>
<dbReference type="Gene3D" id="3.40.50.620">
    <property type="entry name" value="HUPs"/>
    <property type="match status" value="1"/>
</dbReference>
<dbReference type="Gene3D" id="1.10.730.10">
    <property type="entry name" value="Isoleucyl-tRNA Synthetase, Domain 1"/>
    <property type="match status" value="1"/>
</dbReference>
<dbReference type="HAMAP" id="MF_00123">
    <property type="entry name" value="Arg_tRNA_synth"/>
    <property type="match status" value="1"/>
</dbReference>
<dbReference type="InterPro" id="IPR001412">
    <property type="entry name" value="aa-tRNA-synth_I_CS"/>
</dbReference>
<dbReference type="InterPro" id="IPR001278">
    <property type="entry name" value="Arg-tRNA-ligase"/>
</dbReference>
<dbReference type="InterPro" id="IPR005148">
    <property type="entry name" value="Arg-tRNA-synth_N"/>
</dbReference>
<dbReference type="InterPro" id="IPR036695">
    <property type="entry name" value="Arg-tRNA-synth_N_sf"/>
</dbReference>
<dbReference type="InterPro" id="IPR035684">
    <property type="entry name" value="ArgRS_core"/>
</dbReference>
<dbReference type="InterPro" id="IPR008909">
    <property type="entry name" value="DALR_anticod-bd"/>
</dbReference>
<dbReference type="InterPro" id="IPR014729">
    <property type="entry name" value="Rossmann-like_a/b/a_fold"/>
</dbReference>
<dbReference type="InterPro" id="IPR009080">
    <property type="entry name" value="tRNAsynth_Ia_anticodon-bd"/>
</dbReference>
<dbReference type="NCBIfam" id="TIGR00456">
    <property type="entry name" value="argS"/>
    <property type="match status" value="1"/>
</dbReference>
<dbReference type="PANTHER" id="PTHR11956:SF5">
    <property type="entry name" value="ARGININE--TRNA LIGASE, CYTOPLASMIC"/>
    <property type="match status" value="1"/>
</dbReference>
<dbReference type="PANTHER" id="PTHR11956">
    <property type="entry name" value="ARGINYL-TRNA SYNTHETASE"/>
    <property type="match status" value="1"/>
</dbReference>
<dbReference type="Pfam" id="PF03485">
    <property type="entry name" value="Arg_tRNA_synt_N"/>
    <property type="match status" value="1"/>
</dbReference>
<dbReference type="Pfam" id="PF05746">
    <property type="entry name" value="DALR_1"/>
    <property type="match status" value="1"/>
</dbReference>
<dbReference type="Pfam" id="PF00750">
    <property type="entry name" value="tRNA-synt_1d"/>
    <property type="match status" value="1"/>
</dbReference>
<dbReference type="PRINTS" id="PR01038">
    <property type="entry name" value="TRNASYNTHARG"/>
</dbReference>
<dbReference type="SMART" id="SM01016">
    <property type="entry name" value="Arg_tRNA_synt_N"/>
    <property type="match status" value="1"/>
</dbReference>
<dbReference type="SMART" id="SM00836">
    <property type="entry name" value="DALR_1"/>
    <property type="match status" value="1"/>
</dbReference>
<dbReference type="SUPFAM" id="SSF47323">
    <property type="entry name" value="Anticodon-binding domain of a subclass of class I aminoacyl-tRNA synthetases"/>
    <property type="match status" value="1"/>
</dbReference>
<dbReference type="SUPFAM" id="SSF55190">
    <property type="entry name" value="Arginyl-tRNA synthetase (ArgRS), N-terminal 'additional' domain"/>
    <property type="match status" value="1"/>
</dbReference>
<dbReference type="SUPFAM" id="SSF52374">
    <property type="entry name" value="Nucleotidylyl transferase"/>
    <property type="match status" value="1"/>
</dbReference>
<dbReference type="PROSITE" id="PS00178">
    <property type="entry name" value="AA_TRNA_LIGASE_I"/>
    <property type="match status" value="1"/>
</dbReference>